<evidence type="ECO:0000255" key="1">
    <source>
        <dbReference type="HAMAP-Rule" id="MF_00276"/>
    </source>
</evidence>
<sequence>MEKKQSILSPIIRITFTFLVLCGLVYPLIVTGIAQAVMKDNADGSLIYNDKNEVIGSKLIGQNFTDPRYFQGRVSSIEYKAEASGSNNYAPSNPDLEKRVEKSIEEWKKQNRAVPVTEVPIDLVTNSGSGLDPDISPQAASVQVDRISKLTNITKETLNQLIKDQTEGAALGLFGENRVNVLKLNLELQKLLK</sequence>
<keyword id="KW-0067">ATP-binding</keyword>
<keyword id="KW-1003">Cell membrane</keyword>
<keyword id="KW-0406">Ion transport</keyword>
<keyword id="KW-0472">Membrane</keyword>
<keyword id="KW-0547">Nucleotide-binding</keyword>
<keyword id="KW-0630">Potassium</keyword>
<keyword id="KW-0633">Potassium transport</keyword>
<keyword id="KW-0812">Transmembrane</keyword>
<keyword id="KW-1133">Transmembrane helix</keyword>
<keyword id="KW-0813">Transport</keyword>
<accession>B7II10</accession>
<feature type="chain" id="PRO_1000119349" description="Potassium-transporting ATPase KdpC subunit">
    <location>
        <begin position="1"/>
        <end position="193"/>
    </location>
</feature>
<feature type="transmembrane region" description="Helical" evidence="1">
    <location>
        <begin position="14"/>
        <end position="34"/>
    </location>
</feature>
<reference key="1">
    <citation type="submission" date="2008-10" db="EMBL/GenBank/DDBJ databases">
        <title>Genome sequence of Bacillus cereus G9842.</title>
        <authorList>
            <person name="Dodson R.J."/>
            <person name="Durkin A.S."/>
            <person name="Rosovitz M.J."/>
            <person name="Rasko D.A."/>
            <person name="Hoffmaster A."/>
            <person name="Ravel J."/>
            <person name="Sutton G."/>
        </authorList>
    </citation>
    <scope>NUCLEOTIDE SEQUENCE [LARGE SCALE GENOMIC DNA]</scope>
    <source>
        <strain>G9842</strain>
    </source>
</reference>
<name>KDPC_BACC2</name>
<organism>
    <name type="scientific">Bacillus cereus (strain G9842)</name>
    <dbReference type="NCBI Taxonomy" id="405531"/>
    <lineage>
        <taxon>Bacteria</taxon>
        <taxon>Bacillati</taxon>
        <taxon>Bacillota</taxon>
        <taxon>Bacilli</taxon>
        <taxon>Bacillales</taxon>
        <taxon>Bacillaceae</taxon>
        <taxon>Bacillus</taxon>
        <taxon>Bacillus cereus group</taxon>
    </lineage>
</organism>
<proteinExistence type="inferred from homology"/>
<protein>
    <recommendedName>
        <fullName evidence="1">Potassium-transporting ATPase KdpC subunit</fullName>
    </recommendedName>
    <alternativeName>
        <fullName evidence="1">ATP phosphohydrolase [potassium-transporting] C chain</fullName>
    </alternativeName>
    <alternativeName>
        <fullName evidence="1">Potassium-binding and translocating subunit C</fullName>
    </alternativeName>
    <alternativeName>
        <fullName evidence="1">Potassium-translocating ATPase C chain</fullName>
    </alternativeName>
</protein>
<dbReference type="EMBL" id="CP001186">
    <property type="protein sequence ID" value="ACK97152.1"/>
    <property type="molecule type" value="Genomic_DNA"/>
</dbReference>
<dbReference type="RefSeq" id="WP_000412611.1">
    <property type="nucleotide sequence ID" value="NC_011772.1"/>
</dbReference>
<dbReference type="SMR" id="B7II10"/>
<dbReference type="KEGG" id="bcg:BCG9842_B4532"/>
<dbReference type="HOGENOM" id="CLU_077094_1_0_9"/>
<dbReference type="Proteomes" id="UP000006744">
    <property type="component" value="Chromosome"/>
</dbReference>
<dbReference type="GO" id="GO:0005886">
    <property type="term" value="C:plasma membrane"/>
    <property type="evidence" value="ECO:0007669"/>
    <property type="project" value="UniProtKB-SubCell"/>
</dbReference>
<dbReference type="GO" id="GO:0005524">
    <property type="term" value="F:ATP binding"/>
    <property type="evidence" value="ECO:0007669"/>
    <property type="project" value="UniProtKB-UniRule"/>
</dbReference>
<dbReference type="GO" id="GO:0008556">
    <property type="term" value="F:P-type potassium transmembrane transporter activity"/>
    <property type="evidence" value="ECO:0007669"/>
    <property type="project" value="InterPro"/>
</dbReference>
<dbReference type="HAMAP" id="MF_00276">
    <property type="entry name" value="KdpC"/>
    <property type="match status" value="1"/>
</dbReference>
<dbReference type="InterPro" id="IPR003820">
    <property type="entry name" value="KdpC"/>
</dbReference>
<dbReference type="NCBIfam" id="TIGR00681">
    <property type="entry name" value="kdpC"/>
    <property type="match status" value="1"/>
</dbReference>
<dbReference type="NCBIfam" id="NF001454">
    <property type="entry name" value="PRK00315.1"/>
    <property type="match status" value="1"/>
</dbReference>
<dbReference type="NCBIfam" id="NF010601">
    <property type="entry name" value="PRK13997.1"/>
    <property type="match status" value="1"/>
</dbReference>
<dbReference type="PANTHER" id="PTHR30042">
    <property type="entry name" value="POTASSIUM-TRANSPORTING ATPASE C CHAIN"/>
    <property type="match status" value="1"/>
</dbReference>
<dbReference type="PANTHER" id="PTHR30042:SF2">
    <property type="entry name" value="POTASSIUM-TRANSPORTING ATPASE KDPC SUBUNIT"/>
    <property type="match status" value="1"/>
</dbReference>
<dbReference type="Pfam" id="PF02669">
    <property type="entry name" value="KdpC"/>
    <property type="match status" value="1"/>
</dbReference>
<dbReference type="PIRSF" id="PIRSF001296">
    <property type="entry name" value="K_ATPase_KdpC"/>
    <property type="match status" value="1"/>
</dbReference>
<gene>
    <name evidence="1" type="primary">kdpC</name>
    <name type="ordered locus">BCG9842_B4532</name>
</gene>
<comment type="function">
    <text evidence="1">Part of the high-affinity ATP-driven potassium transport (or Kdp) system, which catalyzes the hydrolysis of ATP coupled with the electrogenic transport of potassium into the cytoplasm. This subunit acts as a catalytic chaperone that increases the ATP-binding affinity of the ATP-hydrolyzing subunit KdpB by the formation of a transient KdpB/KdpC/ATP ternary complex.</text>
</comment>
<comment type="subunit">
    <text evidence="1">The system is composed of three essential subunits: KdpA, KdpB and KdpC.</text>
</comment>
<comment type="subcellular location">
    <subcellularLocation>
        <location evidence="1">Cell membrane</location>
        <topology evidence="1">Single-pass membrane protein</topology>
    </subcellularLocation>
</comment>
<comment type="similarity">
    <text evidence="1">Belongs to the KdpC family.</text>
</comment>